<keyword id="KW-0150">Chloroplast</keyword>
<keyword id="KW-0472">Membrane</keyword>
<keyword id="KW-0602">Photosynthesis</keyword>
<keyword id="KW-0604">Photosystem II</keyword>
<keyword id="KW-0934">Plastid</keyword>
<keyword id="KW-0674">Reaction center</keyword>
<keyword id="KW-0793">Thylakoid</keyword>
<keyword id="KW-0812">Transmembrane</keyword>
<keyword id="KW-1133">Transmembrane helix</keyword>
<dbReference type="EMBL" id="DQ864733">
    <property type="protein sequence ID" value="ABI49003.1"/>
    <property type="molecule type" value="Genomic_DNA"/>
</dbReference>
<dbReference type="RefSeq" id="YP_740458.1">
    <property type="nucleotide sequence ID" value="NC_008334.1"/>
</dbReference>
<dbReference type="SMR" id="Q09MJ5"/>
<dbReference type="GeneID" id="4271153"/>
<dbReference type="KEGG" id="cit:4271153"/>
<dbReference type="OrthoDB" id="864701at71240"/>
<dbReference type="GO" id="GO:0009535">
    <property type="term" value="C:chloroplast thylakoid membrane"/>
    <property type="evidence" value="ECO:0007669"/>
    <property type="project" value="UniProtKB-SubCell"/>
</dbReference>
<dbReference type="GO" id="GO:0009539">
    <property type="term" value="C:photosystem II reaction center"/>
    <property type="evidence" value="ECO:0007669"/>
    <property type="project" value="InterPro"/>
</dbReference>
<dbReference type="GO" id="GO:0015979">
    <property type="term" value="P:photosynthesis"/>
    <property type="evidence" value="ECO:0007669"/>
    <property type="project" value="UniProtKB-UniRule"/>
</dbReference>
<dbReference type="HAMAP" id="MF_00441">
    <property type="entry name" value="PSII_PsbK"/>
    <property type="match status" value="1"/>
</dbReference>
<dbReference type="InterPro" id="IPR003687">
    <property type="entry name" value="PSII_PsbK"/>
</dbReference>
<dbReference type="InterPro" id="IPR037270">
    <property type="entry name" value="PSII_PsbK_sf"/>
</dbReference>
<dbReference type="NCBIfam" id="NF002715">
    <property type="entry name" value="PRK02553.1"/>
    <property type="match status" value="1"/>
</dbReference>
<dbReference type="PANTHER" id="PTHR35325">
    <property type="match status" value="1"/>
</dbReference>
<dbReference type="PANTHER" id="PTHR35325:SF1">
    <property type="entry name" value="PHOTOSYSTEM II REACTION CENTER PROTEIN K"/>
    <property type="match status" value="1"/>
</dbReference>
<dbReference type="Pfam" id="PF02533">
    <property type="entry name" value="PsbK"/>
    <property type="match status" value="1"/>
</dbReference>
<dbReference type="SUPFAM" id="SSF161037">
    <property type="entry name" value="Photosystem II reaction center protein K, PsbK"/>
    <property type="match status" value="1"/>
</dbReference>
<sequence>MLNIFSLMYICLNSALYSSSFLFAKLPEAYAFLNPIVDVMPVIPVLFFLLAFVWQAAVSFR</sequence>
<name>PSBK_CITSI</name>
<feature type="propeptide" id="PRO_0000276130" evidence="1">
    <location>
        <begin position="1"/>
        <end position="24"/>
    </location>
</feature>
<feature type="chain" id="PRO_0000276131" description="Photosystem II reaction center protein K" evidence="1">
    <location>
        <begin position="25"/>
        <end position="61"/>
    </location>
</feature>
<feature type="transmembrane region" description="Helical" evidence="1">
    <location>
        <begin position="40"/>
        <end position="60"/>
    </location>
</feature>
<accession>Q09MJ5</accession>
<evidence type="ECO:0000255" key="1">
    <source>
        <dbReference type="HAMAP-Rule" id="MF_00441"/>
    </source>
</evidence>
<organism>
    <name type="scientific">Citrus sinensis</name>
    <name type="common">Sweet orange</name>
    <name type="synonym">Citrus aurantium var. sinensis</name>
    <dbReference type="NCBI Taxonomy" id="2711"/>
    <lineage>
        <taxon>Eukaryota</taxon>
        <taxon>Viridiplantae</taxon>
        <taxon>Streptophyta</taxon>
        <taxon>Embryophyta</taxon>
        <taxon>Tracheophyta</taxon>
        <taxon>Spermatophyta</taxon>
        <taxon>Magnoliopsida</taxon>
        <taxon>eudicotyledons</taxon>
        <taxon>Gunneridae</taxon>
        <taxon>Pentapetalae</taxon>
        <taxon>rosids</taxon>
        <taxon>malvids</taxon>
        <taxon>Sapindales</taxon>
        <taxon>Rutaceae</taxon>
        <taxon>Aurantioideae</taxon>
        <taxon>Citrus</taxon>
    </lineage>
</organism>
<proteinExistence type="inferred from homology"/>
<geneLocation type="chloroplast"/>
<comment type="function">
    <text evidence="1">One of the components of the core complex of photosystem II (PSII). PSII is a light-driven water:plastoquinone oxidoreductase that uses light energy to abstract electrons from H(2)O, generating O(2) and a proton gradient subsequently used for ATP formation. It consists of a core antenna complex that captures photons, and an electron transfer chain that converts photonic excitation into a charge separation.</text>
</comment>
<comment type="subunit">
    <text evidence="1">PSII is composed of 1 copy each of membrane proteins PsbA, PsbB, PsbC, PsbD, PsbE, PsbF, PsbH, PsbI, PsbJ, PsbK, PsbL, PsbM, PsbT, PsbX, PsbY, PsbZ, Psb30/Ycf12, at least 3 peripheral proteins of the oxygen-evolving complex and a large number of cofactors. It forms dimeric complexes.</text>
</comment>
<comment type="subcellular location">
    <subcellularLocation>
        <location evidence="1">Plastid</location>
        <location evidence="1">Chloroplast thylakoid membrane</location>
        <topology evidence="1">Single-pass membrane protein</topology>
    </subcellularLocation>
</comment>
<comment type="similarity">
    <text evidence="1">Belongs to the PsbK family.</text>
</comment>
<reference key="1">
    <citation type="journal article" date="2006" name="BMC Plant Biol.">
        <title>The complete chloroplast genome sequence of Citrus sinensis (L.) Osbeck var 'Ridge Pineapple': organization and phylogenetic relationships to other angiosperms.</title>
        <authorList>
            <person name="Bausher M.G."/>
            <person name="Singh N.D."/>
            <person name="Lee S.-B."/>
            <person name="Jansen R.K."/>
            <person name="Daniell H."/>
        </authorList>
    </citation>
    <scope>NUCLEOTIDE SEQUENCE [LARGE SCALE GENOMIC DNA]</scope>
    <source>
        <strain>cv. Osbeck var. Ridge Pineapple</strain>
    </source>
</reference>
<gene>
    <name evidence="1" type="primary">psbK</name>
</gene>
<protein>
    <recommendedName>
        <fullName evidence="1">Photosystem II reaction center protein K</fullName>
        <shortName evidence="1">PSII-K</shortName>
    </recommendedName>
</protein>